<reference key="1">
    <citation type="journal article" date="2003" name="Proc. Natl. Acad. Sci. U.S.A.">
        <title>Complete genome sequence of the marine planctomycete Pirellula sp. strain 1.</title>
        <authorList>
            <person name="Gloeckner F.O."/>
            <person name="Kube M."/>
            <person name="Bauer M."/>
            <person name="Teeling H."/>
            <person name="Lombardot T."/>
            <person name="Ludwig W."/>
            <person name="Gade D."/>
            <person name="Beck A."/>
            <person name="Borzym K."/>
            <person name="Heitmann K."/>
            <person name="Rabus R."/>
            <person name="Schlesner H."/>
            <person name="Amann R."/>
            <person name="Reinhardt R."/>
        </authorList>
    </citation>
    <scope>NUCLEOTIDE SEQUENCE [LARGE SCALE GENOMIC DNA]</scope>
    <source>
        <strain>DSM 10527 / NCIMB 13988 / SH1</strain>
    </source>
</reference>
<dbReference type="EC" id="2.4.2.1" evidence="1"/>
<dbReference type="EC" id="2.4.2.2" evidence="1"/>
<dbReference type="EMBL" id="BX294140">
    <property type="protein sequence ID" value="CAD73896.1"/>
    <property type="molecule type" value="Genomic_DNA"/>
</dbReference>
<dbReference type="RefSeq" id="NP_866210.1">
    <property type="nucleotide sequence ID" value="NC_005027.1"/>
</dbReference>
<dbReference type="SMR" id="Q7USA1"/>
<dbReference type="FunCoup" id="Q7USA1">
    <property type="interactions" value="53"/>
</dbReference>
<dbReference type="STRING" id="243090.RB4629"/>
<dbReference type="EnsemblBacteria" id="CAD73896">
    <property type="protein sequence ID" value="CAD73896"/>
    <property type="gene ID" value="RB4629"/>
</dbReference>
<dbReference type="KEGG" id="rba:RB4629"/>
<dbReference type="PATRIC" id="fig|243090.15.peg.2169"/>
<dbReference type="eggNOG" id="COG3123">
    <property type="taxonomic scope" value="Bacteria"/>
</dbReference>
<dbReference type="HOGENOM" id="CLU_157874_0_0_0"/>
<dbReference type="InParanoid" id="Q7USA1"/>
<dbReference type="OrthoDB" id="9793848at2"/>
<dbReference type="Proteomes" id="UP000001025">
    <property type="component" value="Chromosome"/>
</dbReference>
<dbReference type="GO" id="GO:0005829">
    <property type="term" value="C:cytosol"/>
    <property type="evidence" value="ECO:0000318"/>
    <property type="project" value="GO_Central"/>
</dbReference>
<dbReference type="GO" id="GO:0047975">
    <property type="term" value="F:guanosine phosphorylase activity"/>
    <property type="evidence" value="ECO:0007669"/>
    <property type="project" value="UniProtKB-EC"/>
</dbReference>
<dbReference type="GO" id="GO:0004731">
    <property type="term" value="F:purine-nucleoside phosphorylase activity"/>
    <property type="evidence" value="ECO:0000318"/>
    <property type="project" value="GO_Central"/>
</dbReference>
<dbReference type="GO" id="GO:0016154">
    <property type="term" value="F:pyrimidine-nucleoside phosphorylase activity"/>
    <property type="evidence" value="ECO:0000318"/>
    <property type="project" value="GO_Central"/>
</dbReference>
<dbReference type="GO" id="GO:0009032">
    <property type="term" value="F:thymidine phosphorylase activity"/>
    <property type="evidence" value="ECO:0007669"/>
    <property type="project" value="UniProtKB-EC"/>
</dbReference>
<dbReference type="GO" id="GO:0004850">
    <property type="term" value="F:uridine phosphorylase activity"/>
    <property type="evidence" value="ECO:0007669"/>
    <property type="project" value="UniProtKB-EC"/>
</dbReference>
<dbReference type="FunFam" id="2.60.120.10:FF:000016">
    <property type="entry name" value="Pyrimidine/purine nucleoside phosphorylase"/>
    <property type="match status" value="1"/>
</dbReference>
<dbReference type="Gene3D" id="2.60.120.10">
    <property type="entry name" value="Jelly Rolls"/>
    <property type="match status" value="1"/>
</dbReference>
<dbReference type="HAMAP" id="MF_01537">
    <property type="entry name" value="Nucleos_phosphorylase_PpnP"/>
    <property type="match status" value="1"/>
</dbReference>
<dbReference type="InterPro" id="IPR009664">
    <property type="entry name" value="Ppnp"/>
</dbReference>
<dbReference type="InterPro" id="IPR014710">
    <property type="entry name" value="RmlC-like_jellyroll"/>
</dbReference>
<dbReference type="InterPro" id="IPR011051">
    <property type="entry name" value="RmlC_Cupin_sf"/>
</dbReference>
<dbReference type="PANTHER" id="PTHR36540">
    <property type="entry name" value="PYRIMIDINE/PURINE NUCLEOSIDE PHOSPHORYLASE"/>
    <property type="match status" value="1"/>
</dbReference>
<dbReference type="PANTHER" id="PTHR36540:SF1">
    <property type="entry name" value="PYRIMIDINE_PURINE NUCLEOSIDE PHOSPHORYLASE"/>
    <property type="match status" value="1"/>
</dbReference>
<dbReference type="Pfam" id="PF06865">
    <property type="entry name" value="Ppnp"/>
    <property type="match status" value="1"/>
</dbReference>
<dbReference type="SUPFAM" id="SSF51182">
    <property type="entry name" value="RmlC-like cupins"/>
    <property type="match status" value="1"/>
</dbReference>
<gene>
    <name evidence="1" type="primary">ppnP</name>
    <name type="ordered locus">RB4629</name>
</gene>
<evidence type="ECO:0000255" key="1">
    <source>
        <dbReference type="HAMAP-Rule" id="MF_01537"/>
    </source>
</evidence>
<comment type="function">
    <text evidence="1">Catalyzes the phosphorolysis of diverse nucleosides, yielding D-ribose 1-phosphate and the respective free bases. Can use uridine, adenosine, guanosine, cytidine, thymidine, inosine and xanthosine as substrates. Also catalyzes the reverse reactions.</text>
</comment>
<comment type="catalytic activity">
    <reaction evidence="1">
        <text>a purine D-ribonucleoside + phosphate = a purine nucleobase + alpha-D-ribose 1-phosphate</text>
        <dbReference type="Rhea" id="RHEA:19805"/>
        <dbReference type="ChEBI" id="CHEBI:26386"/>
        <dbReference type="ChEBI" id="CHEBI:43474"/>
        <dbReference type="ChEBI" id="CHEBI:57720"/>
        <dbReference type="ChEBI" id="CHEBI:142355"/>
        <dbReference type="EC" id="2.4.2.1"/>
    </reaction>
</comment>
<comment type="catalytic activity">
    <reaction evidence="1">
        <text>adenosine + phosphate = alpha-D-ribose 1-phosphate + adenine</text>
        <dbReference type="Rhea" id="RHEA:27642"/>
        <dbReference type="ChEBI" id="CHEBI:16335"/>
        <dbReference type="ChEBI" id="CHEBI:16708"/>
        <dbReference type="ChEBI" id="CHEBI:43474"/>
        <dbReference type="ChEBI" id="CHEBI:57720"/>
        <dbReference type="EC" id="2.4.2.1"/>
    </reaction>
</comment>
<comment type="catalytic activity">
    <reaction evidence="1">
        <text>cytidine + phosphate = cytosine + alpha-D-ribose 1-phosphate</text>
        <dbReference type="Rhea" id="RHEA:52540"/>
        <dbReference type="ChEBI" id="CHEBI:16040"/>
        <dbReference type="ChEBI" id="CHEBI:17562"/>
        <dbReference type="ChEBI" id="CHEBI:43474"/>
        <dbReference type="ChEBI" id="CHEBI:57720"/>
        <dbReference type="EC" id="2.4.2.2"/>
    </reaction>
</comment>
<comment type="catalytic activity">
    <reaction evidence="1">
        <text>guanosine + phosphate = alpha-D-ribose 1-phosphate + guanine</text>
        <dbReference type="Rhea" id="RHEA:13233"/>
        <dbReference type="ChEBI" id="CHEBI:16235"/>
        <dbReference type="ChEBI" id="CHEBI:16750"/>
        <dbReference type="ChEBI" id="CHEBI:43474"/>
        <dbReference type="ChEBI" id="CHEBI:57720"/>
        <dbReference type="EC" id="2.4.2.1"/>
    </reaction>
</comment>
<comment type="catalytic activity">
    <reaction evidence="1">
        <text>inosine + phosphate = alpha-D-ribose 1-phosphate + hypoxanthine</text>
        <dbReference type="Rhea" id="RHEA:27646"/>
        <dbReference type="ChEBI" id="CHEBI:17368"/>
        <dbReference type="ChEBI" id="CHEBI:17596"/>
        <dbReference type="ChEBI" id="CHEBI:43474"/>
        <dbReference type="ChEBI" id="CHEBI:57720"/>
        <dbReference type="EC" id="2.4.2.1"/>
    </reaction>
</comment>
<comment type="catalytic activity">
    <reaction evidence="1">
        <text>thymidine + phosphate = 2-deoxy-alpha-D-ribose 1-phosphate + thymine</text>
        <dbReference type="Rhea" id="RHEA:16037"/>
        <dbReference type="ChEBI" id="CHEBI:17748"/>
        <dbReference type="ChEBI" id="CHEBI:17821"/>
        <dbReference type="ChEBI" id="CHEBI:43474"/>
        <dbReference type="ChEBI" id="CHEBI:57259"/>
        <dbReference type="EC" id="2.4.2.2"/>
    </reaction>
</comment>
<comment type="catalytic activity">
    <reaction evidence="1">
        <text>uridine + phosphate = alpha-D-ribose 1-phosphate + uracil</text>
        <dbReference type="Rhea" id="RHEA:24388"/>
        <dbReference type="ChEBI" id="CHEBI:16704"/>
        <dbReference type="ChEBI" id="CHEBI:17568"/>
        <dbReference type="ChEBI" id="CHEBI:43474"/>
        <dbReference type="ChEBI" id="CHEBI:57720"/>
        <dbReference type="EC" id="2.4.2.2"/>
    </reaction>
</comment>
<comment type="catalytic activity">
    <reaction evidence="1">
        <text>xanthosine + phosphate = alpha-D-ribose 1-phosphate + xanthine</text>
        <dbReference type="Rhea" id="RHEA:27638"/>
        <dbReference type="ChEBI" id="CHEBI:17712"/>
        <dbReference type="ChEBI" id="CHEBI:18107"/>
        <dbReference type="ChEBI" id="CHEBI:43474"/>
        <dbReference type="ChEBI" id="CHEBI:57720"/>
        <dbReference type="EC" id="2.4.2.1"/>
    </reaction>
</comment>
<comment type="similarity">
    <text evidence="1">Belongs to the nucleoside phosphorylase PpnP family.</text>
</comment>
<organism>
    <name type="scientific">Rhodopirellula baltica (strain DSM 10527 / NCIMB 13988 / SH1)</name>
    <dbReference type="NCBI Taxonomy" id="243090"/>
    <lineage>
        <taxon>Bacteria</taxon>
        <taxon>Pseudomonadati</taxon>
        <taxon>Planctomycetota</taxon>
        <taxon>Planctomycetia</taxon>
        <taxon>Pirellulales</taxon>
        <taxon>Pirellulaceae</taxon>
        <taxon>Rhodopirellula</taxon>
    </lineage>
</organism>
<name>PPNP_RHOBA</name>
<protein>
    <recommendedName>
        <fullName evidence="1">Pyrimidine/purine nucleoside phosphorylase</fullName>
        <ecNumber evidence="1">2.4.2.1</ecNumber>
        <ecNumber evidence="1">2.4.2.2</ecNumber>
    </recommendedName>
    <alternativeName>
        <fullName evidence="1">Adenosine phosphorylase</fullName>
    </alternativeName>
    <alternativeName>
        <fullName evidence="1">Cytidine phosphorylase</fullName>
    </alternativeName>
    <alternativeName>
        <fullName evidence="1">Guanosine phosphorylase</fullName>
    </alternativeName>
    <alternativeName>
        <fullName evidence="1">Inosine phosphorylase</fullName>
    </alternativeName>
    <alternativeName>
        <fullName evidence="1">Thymidine phosphorylase</fullName>
    </alternativeName>
    <alternativeName>
        <fullName evidence="1">Uridine phosphorylase</fullName>
    </alternativeName>
    <alternativeName>
        <fullName evidence="1">Xanthosine phosphorylase</fullName>
    </alternativeName>
</protein>
<proteinExistence type="inferred from homology"/>
<sequence length="92" mass="10199">MQVNEYFDGNVTSIAFENGEGRATSGVMLVGDYEFGTSEKELMKIVSGKLEAKLPGEPGFRAYPAGSEFRIDANQKFQVRVIEPTAYLCFYS</sequence>
<accession>Q7USA1</accession>
<keyword id="KW-0328">Glycosyltransferase</keyword>
<keyword id="KW-1185">Reference proteome</keyword>
<keyword id="KW-0808">Transferase</keyword>
<feature type="chain" id="PRO_0000211777" description="Pyrimidine/purine nucleoside phosphorylase">
    <location>
        <begin position="1"/>
        <end position="92"/>
    </location>
</feature>